<keyword id="KW-0378">Hydrolase</keyword>
<keyword id="KW-0460">Magnesium</keyword>
<keyword id="KW-0464">Manganese</keyword>
<keyword id="KW-0479">Metal-binding</keyword>
<keyword id="KW-1185">Reference proteome</keyword>
<feature type="chain" id="PRO_0000315574" description="Uncharacterized Nudix hydrolase NudL">
    <location>
        <begin position="1"/>
        <end position="192"/>
    </location>
</feature>
<feature type="domain" description="Nudix hydrolase" evidence="1">
    <location>
        <begin position="29"/>
        <end position="160"/>
    </location>
</feature>
<feature type="short sequence motif" description="Nudix box">
    <location>
        <begin position="67"/>
        <end position="89"/>
    </location>
</feature>
<feature type="binding site" evidence="1">
    <location>
        <position position="83"/>
    </location>
    <ligand>
        <name>Mg(2+)</name>
        <dbReference type="ChEBI" id="CHEBI:18420"/>
    </ligand>
</feature>
<feature type="binding site" evidence="1">
    <location>
        <position position="87"/>
    </location>
    <ligand>
        <name>Mg(2+)</name>
        <dbReference type="ChEBI" id="CHEBI:18420"/>
    </ligand>
</feature>
<proteinExistence type="inferred from homology"/>
<gene>
    <name evidence="1" type="primary">nudL</name>
    <name type="ordered locus">Z2856</name>
    <name type="ordered locus">ECs2522</name>
</gene>
<reference key="1">
    <citation type="journal article" date="2001" name="Nature">
        <title>Genome sequence of enterohaemorrhagic Escherichia coli O157:H7.</title>
        <authorList>
            <person name="Perna N.T."/>
            <person name="Plunkett G. III"/>
            <person name="Burland V."/>
            <person name="Mau B."/>
            <person name="Glasner J.D."/>
            <person name="Rose D.J."/>
            <person name="Mayhew G.F."/>
            <person name="Evans P.S."/>
            <person name="Gregor J."/>
            <person name="Kirkpatrick H.A."/>
            <person name="Posfai G."/>
            <person name="Hackett J."/>
            <person name="Klink S."/>
            <person name="Boutin A."/>
            <person name="Shao Y."/>
            <person name="Miller L."/>
            <person name="Grotbeck E.J."/>
            <person name="Davis N.W."/>
            <person name="Lim A."/>
            <person name="Dimalanta E.T."/>
            <person name="Potamousis K."/>
            <person name="Apodaca J."/>
            <person name="Anantharaman T.S."/>
            <person name="Lin J."/>
            <person name="Yen G."/>
            <person name="Schwartz D.C."/>
            <person name="Welch R.A."/>
            <person name="Blattner F.R."/>
        </authorList>
    </citation>
    <scope>NUCLEOTIDE SEQUENCE [LARGE SCALE GENOMIC DNA]</scope>
    <source>
        <strain>O157:H7 / EDL933 / ATCC 700927 / EHEC</strain>
    </source>
</reference>
<reference key="2">
    <citation type="journal article" date="2001" name="DNA Res.">
        <title>Complete genome sequence of enterohemorrhagic Escherichia coli O157:H7 and genomic comparison with a laboratory strain K-12.</title>
        <authorList>
            <person name="Hayashi T."/>
            <person name="Makino K."/>
            <person name="Ohnishi M."/>
            <person name="Kurokawa K."/>
            <person name="Ishii K."/>
            <person name="Yokoyama K."/>
            <person name="Han C.-G."/>
            <person name="Ohtsubo E."/>
            <person name="Nakayama K."/>
            <person name="Murata T."/>
            <person name="Tanaka M."/>
            <person name="Tobe T."/>
            <person name="Iida T."/>
            <person name="Takami H."/>
            <person name="Honda T."/>
            <person name="Sasakawa C."/>
            <person name="Ogasawara N."/>
            <person name="Yasunaga T."/>
            <person name="Kuhara S."/>
            <person name="Shiba T."/>
            <person name="Hattori M."/>
            <person name="Shinagawa H."/>
        </authorList>
    </citation>
    <scope>NUCLEOTIDE SEQUENCE [LARGE SCALE GENOMIC DNA]</scope>
    <source>
        <strain>O157:H7 / Sakai / RIMD 0509952 / EHEC</strain>
    </source>
</reference>
<name>NUDL_ECO57</name>
<sequence length="192" mass="21464">MEYRSLTLDDFLSRFQLLRPQINRETLNHRQAAVLIPIVRRPQPGLLLTQRSIHLRKHAGQVAFPGGAVDDTDASVIAAALREAEEEVAIPPSAVEVIGVLPPVDSVTGYQVTPVVGIIPPDLPYRASEDEVSAVFEMPLAQALHLGRYHPLDIYRRGDSHRVWLSWYEQYFVWGMTAGIIRELALQIGVKP</sequence>
<protein>
    <recommendedName>
        <fullName evidence="1">Uncharacterized Nudix hydrolase NudL</fullName>
        <ecNumber evidence="1">3.6.1.-</ecNumber>
    </recommendedName>
</protein>
<organism>
    <name type="scientific">Escherichia coli O157:H7</name>
    <dbReference type="NCBI Taxonomy" id="83334"/>
    <lineage>
        <taxon>Bacteria</taxon>
        <taxon>Pseudomonadati</taxon>
        <taxon>Pseudomonadota</taxon>
        <taxon>Gammaproteobacteria</taxon>
        <taxon>Enterobacterales</taxon>
        <taxon>Enterobacteriaceae</taxon>
        <taxon>Escherichia</taxon>
    </lineage>
</organism>
<comment type="function">
    <text evidence="1">Probably mediates the hydrolysis of some nucleoside diphosphate derivatives.</text>
</comment>
<comment type="cofactor">
    <cofactor evidence="1">
        <name>Mn(2+)</name>
        <dbReference type="ChEBI" id="CHEBI:29035"/>
    </cofactor>
    <cofactor evidence="1">
        <name>Mg(2+)</name>
        <dbReference type="ChEBI" id="CHEBI:18420"/>
    </cofactor>
</comment>
<comment type="similarity">
    <text evidence="1">Belongs to the Nudix hydrolase family. PCD1 subfamily.</text>
</comment>
<dbReference type="EC" id="3.6.1.-" evidence="1"/>
<dbReference type="EMBL" id="AE005174">
    <property type="protein sequence ID" value="AAG56802.1"/>
    <property type="molecule type" value="Genomic_DNA"/>
</dbReference>
<dbReference type="EMBL" id="BA000007">
    <property type="protein sequence ID" value="BAB35945.1"/>
    <property type="molecule type" value="Genomic_DNA"/>
</dbReference>
<dbReference type="PIR" id="B90944">
    <property type="entry name" value="B90944"/>
</dbReference>
<dbReference type="PIR" id="F85792">
    <property type="entry name" value="F85792"/>
</dbReference>
<dbReference type="RefSeq" id="NP_310549.1">
    <property type="nucleotide sequence ID" value="NC_002695.1"/>
</dbReference>
<dbReference type="RefSeq" id="WP_000456725.1">
    <property type="nucleotide sequence ID" value="NZ_VOAI01000010.1"/>
</dbReference>
<dbReference type="SMR" id="Q8XCQ2"/>
<dbReference type="STRING" id="155864.Z2856"/>
<dbReference type="GeneID" id="912636"/>
<dbReference type="KEGG" id="ece:Z2856"/>
<dbReference type="KEGG" id="ecs:ECs_2522"/>
<dbReference type="PATRIC" id="fig|386585.9.peg.2643"/>
<dbReference type="eggNOG" id="COG0494">
    <property type="taxonomic scope" value="Bacteria"/>
</dbReference>
<dbReference type="HOGENOM" id="CLU_040940_5_2_6"/>
<dbReference type="OMA" id="YYIWGAT"/>
<dbReference type="Proteomes" id="UP000000558">
    <property type="component" value="Chromosome"/>
</dbReference>
<dbReference type="Proteomes" id="UP000002519">
    <property type="component" value="Chromosome"/>
</dbReference>
<dbReference type="GO" id="GO:0010945">
    <property type="term" value="F:coenzyme A diphosphatase activity"/>
    <property type="evidence" value="ECO:0007669"/>
    <property type="project" value="InterPro"/>
</dbReference>
<dbReference type="GO" id="GO:0000287">
    <property type="term" value="F:magnesium ion binding"/>
    <property type="evidence" value="ECO:0007669"/>
    <property type="project" value="UniProtKB-UniRule"/>
</dbReference>
<dbReference type="GO" id="GO:0030145">
    <property type="term" value="F:manganese ion binding"/>
    <property type="evidence" value="ECO:0007669"/>
    <property type="project" value="UniProtKB-UniRule"/>
</dbReference>
<dbReference type="GO" id="GO:0009132">
    <property type="term" value="P:nucleoside diphosphate metabolic process"/>
    <property type="evidence" value="ECO:0007669"/>
    <property type="project" value="InterPro"/>
</dbReference>
<dbReference type="CDD" id="cd03426">
    <property type="entry name" value="NUDIX_CoAse_Nudt7"/>
    <property type="match status" value="1"/>
</dbReference>
<dbReference type="FunFam" id="3.90.79.10:FF:000013">
    <property type="entry name" value="Uncharacterized Nudix hydrolase NudL"/>
    <property type="match status" value="1"/>
</dbReference>
<dbReference type="Gene3D" id="3.90.79.10">
    <property type="entry name" value="Nucleoside Triphosphate Pyrophosphohydrolase"/>
    <property type="match status" value="1"/>
</dbReference>
<dbReference type="HAMAP" id="MF_01592">
    <property type="entry name" value="Nudix_NudL"/>
    <property type="match status" value="1"/>
</dbReference>
<dbReference type="InterPro" id="IPR045121">
    <property type="entry name" value="CoAse"/>
</dbReference>
<dbReference type="InterPro" id="IPR015797">
    <property type="entry name" value="NUDIX_hydrolase-like_dom_sf"/>
</dbReference>
<dbReference type="InterPro" id="IPR000086">
    <property type="entry name" value="NUDIX_hydrolase_dom"/>
</dbReference>
<dbReference type="InterPro" id="IPR000059">
    <property type="entry name" value="NUDIX_hydrolase_NudL_CS"/>
</dbReference>
<dbReference type="InterPro" id="IPR023735">
    <property type="entry name" value="Nudix_NudL"/>
</dbReference>
<dbReference type="NCBIfam" id="NF007980">
    <property type="entry name" value="PRK10707.1"/>
    <property type="match status" value="1"/>
</dbReference>
<dbReference type="PANTHER" id="PTHR12992:SF11">
    <property type="entry name" value="MITOCHONDRIAL COENZYME A DIPHOSPHATASE NUDT8"/>
    <property type="match status" value="1"/>
</dbReference>
<dbReference type="PANTHER" id="PTHR12992">
    <property type="entry name" value="NUDIX HYDROLASE"/>
    <property type="match status" value="1"/>
</dbReference>
<dbReference type="Pfam" id="PF00293">
    <property type="entry name" value="NUDIX"/>
    <property type="match status" value="1"/>
</dbReference>
<dbReference type="SUPFAM" id="SSF55811">
    <property type="entry name" value="Nudix"/>
    <property type="match status" value="1"/>
</dbReference>
<dbReference type="PROSITE" id="PS51462">
    <property type="entry name" value="NUDIX"/>
    <property type="match status" value="1"/>
</dbReference>
<dbReference type="PROSITE" id="PS01293">
    <property type="entry name" value="NUDIX_COA"/>
    <property type="match status" value="1"/>
</dbReference>
<accession>Q8XCQ2</accession>
<accession>Q7AD94</accession>
<evidence type="ECO:0000255" key="1">
    <source>
        <dbReference type="HAMAP-Rule" id="MF_01592"/>
    </source>
</evidence>